<keyword id="KW-0044">Antibiotic</keyword>
<keyword id="KW-0929">Antimicrobial</keyword>
<keyword id="KW-0204">Cytolysis</keyword>
<keyword id="KW-0903">Direct protein sequencing</keyword>
<keyword id="KW-1015">Disulfide bond</keyword>
<keyword id="KW-0960">Knottin</keyword>
<keyword id="KW-0964">Secreted</keyword>
<keyword id="KW-0732">Signal</keyword>
<keyword id="KW-0800">Toxin</keyword>
<sequence>MKFALVLLGVCAFYLVNATGDLETELEASELQELQEALDLIAETPLESLEAEELEEARKFKLPKINWGKLASKAKDVYKKGQKLAKNKNVKKALKYGKQLAENLAAGEVHEPGTPVGNNKCWAIGTRCTDDCDCCPEHHCHCPAKSWTFGLIPCSCQVTESDKVNKCPPAE</sequence>
<name>SPN2A_OXYTA</name>
<reference key="1">
    <citation type="journal article" date="2013" name="FEBS J.">
        <title>Spider toxins comprising disulfide-rich and linear amphipathic domains: A new class of molecules identified in the lynx spider Oxyopes takobius.</title>
        <authorList>
            <person name="Vassilevski A.A."/>
            <person name="Sachkova M.Y."/>
            <person name="Ignatova A.A."/>
            <person name="Kozlov S.A."/>
            <person name="Feofanov A.V."/>
            <person name="Grishin E.V."/>
        </authorList>
    </citation>
    <scope>NUCLEOTIDE SEQUENCE [MRNA]</scope>
    <scope>PROTEIN SEQUENCE OF 59-95</scope>
    <scope>SUBCELLULAR LOCATION</scope>
    <scope>DISULFIDE BONDS</scope>
    <scope>MASS SPECTROMETRY</scope>
    <source>
        <tissue>Venom</tissue>
        <tissue>Venom gland</tissue>
    </source>
</reference>
<protein>
    <recommendedName>
        <fullName evidence="5">Spiderine-2a</fullName>
    </recommendedName>
    <alternativeName>
        <fullName evidence="5">OtTx2a</fullName>
    </alternativeName>
</protein>
<comment type="function">
    <text evidence="1">Has antimicrobial, insecticidal, cytolytic and cytotoxic activity.</text>
</comment>
<comment type="subcellular location">
    <subcellularLocation>
        <location evidence="4">Secreted</location>
    </subcellularLocation>
</comment>
<comment type="tissue specificity">
    <text evidence="7">Expressed by the venom gland.</text>
</comment>
<comment type="domain">
    <text evidence="1">The presence of a 'disulfide through disulfide knot' structurally defines this protein as a knottin.</text>
</comment>
<comment type="domain">
    <text evidence="1">The N-terminal part of the mature protein (59-105) probably forms an alpha-helix which acts as a membrane-active peptide. It is necessary and sufficient for the toxin's antimicrobial, insecticidal, cytolytic and cytotoxic activity.</text>
</comment>
<comment type="PTM">
    <text evidence="4">Disulfide bonds.</text>
</comment>
<comment type="mass spectrometry"/>
<comment type="similarity">
    <text evidence="6">Belongs to the spiderine family. Cationic/spiderine subfamily.</text>
</comment>
<organism>
    <name type="scientific">Oxyopes takobius</name>
    <name type="common">Lynx spider</name>
    <name type="synonym">Oxyopes foliiformis</name>
    <dbReference type="NCBI Taxonomy" id="666126"/>
    <lineage>
        <taxon>Eukaryota</taxon>
        <taxon>Metazoa</taxon>
        <taxon>Ecdysozoa</taxon>
        <taxon>Arthropoda</taxon>
        <taxon>Chelicerata</taxon>
        <taxon>Arachnida</taxon>
        <taxon>Araneae</taxon>
        <taxon>Araneomorphae</taxon>
        <taxon>Entelegynae</taxon>
        <taxon>Lycosoidea</taxon>
        <taxon>Oxyopidae</taxon>
        <taxon>Oxyopes</taxon>
    </lineage>
</organism>
<proteinExistence type="evidence at protein level"/>
<accession>P86718</accession>
<accession>S4TZ44</accession>
<evidence type="ECO:0000250" key="1">
    <source>
        <dbReference type="UniProtKB" id="P86716"/>
    </source>
</evidence>
<evidence type="ECO:0000255" key="2"/>
<evidence type="ECO:0000255" key="3">
    <source>
        <dbReference type="PROSITE-ProRule" id="PRU01208"/>
    </source>
</evidence>
<evidence type="ECO:0000269" key="4">
    <source>
    </source>
</evidence>
<evidence type="ECO:0000303" key="5">
    <source>
    </source>
</evidence>
<evidence type="ECO:0000305" key="6"/>
<evidence type="ECO:0000305" key="7">
    <source>
    </source>
</evidence>
<feature type="signal peptide" evidence="2">
    <location>
        <begin position="1"/>
        <end position="18"/>
    </location>
</feature>
<feature type="propeptide" id="PRO_0000425696" description="Removed in mature form" evidence="4">
    <location>
        <begin position="19"/>
        <end position="58"/>
    </location>
</feature>
<feature type="chain" id="PRO_0000425697" description="Spiderine-2a" evidence="4">
    <location>
        <begin position="59"/>
        <end position="171"/>
    </location>
</feature>
<feature type="domain" description="Oxytoxin-type inhibitor cystine knot (ICK)" evidence="3">
    <location>
        <begin position="118"/>
        <end position="171"/>
    </location>
</feature>
<feature type="region of interest" description="Linear cationic cytotoxin domain" evidence="1">
    <location>
        <begin position="59"/>
        <end position="104"/>
    </location>
</feature>
<feature type="disulfide bond" evidence="1">
    <location>
        <begin position="121"/>
        <end position="135"/>
    </location>
</feature>
<feature type="disulfide bond" evidence="1">
    <location>
        <begin position="128"/>
        <end position="140"/>
    </location>
</feature>
<feature type="disulfide bond" evidence="1">
    <location>
        <begin position="132"/>
        <end position="167"/>
    </location>
</feature>
<feature type="disulfide bond" evidence="1">
    <location>
        <begin position="134"/>
        <end position="156"/>
    </location>
</feature>
<feature type="disulfide bond" evidence="1">
    <location>
        <begin position="142"/>
        <end position="154"/>
    </location>
</feature>
<dbReference type="EMBL" id="JX134896">
    <property type="protein sequence ID" value="AGG39775.1"/>
    <property type="molecule type" value="mRNA"/>
</dbReference>
<dbReference type="SMR" id="P86718"/>
<dbReference type="ArachnoServer" id="AS001753">
    <property type="toxin name" value="M-oxotoxin-Ot3j"/>
</dbReference>
<dbReference type="GO" id="GO:0005576">
    <property type="term" value="C:extracellular region"/>
    <property type="evidence" value="ECO:0007669"/>
    <property type="project" value="UniProtKB-SubCell"/>
</dbReference>
<dbReference type="GO" id="GO:0090729">
    <property type="term" value="F:toxin activity"/>
    <property type="evidence" value="ECO:0007669"/>
    <property type="project" value="UniProtKB-KW"/>
</dbReference>
<dbReference type="GO" id="GO:0042742">
    <property type="term" value="P:defense response to bacterium"/>
    <property type="evidence" value="ECO:0007669"/>
    <property type="project" value="UniProtKB-KW"/>
</dbReference>
<dbReference type="GO" id="GO:0031640">
    <property type="term" value="P:killing of cells of another organism"/>
    <property type="evidence" value="ECO:0007669"/>
    <property type="project" value="UniProtKB-KW"/>
</dbReference>
<dbReference type="InterPro" id="IPR044061">
    <property type="entry name" value="OXYTX_ICK"/>
</dbReference>
<dbReference type="PROSITE" id="PS51861">
    <property type="entry name" value="OXYTX_ICK"/>
    <property type="match status" value="1"/>
</dbReference>